<proteinExistence type="evidence at protein level"/>
<protein>
    <recommendedName>
        <fullName evidence="1">Chromosome partition protein MukE</fullName>
    </recommendedName>
</protein>
<keyword id="KW-0002">3D-structure</keyword>
<keyword id="KW-0131">Cell cycle</keyword>
<keyword id="KW-0132">Cell division</keyword>
<keyword id="KW-0159">Chromosome partition</keyword>
<keyword id="KW-0963">Cytoplasm</keyword>
<keyword id="KW-0226">DNA condensation</keyword>
<keyword id="KW-1185">Reference proteome</keyword>
<sequence length="238" mass="26842">MTEYIQDAIPAKLAIAIANPIFPQLDSQLRAGRHISIEMLDEHAFLMDFQTELESFYRRYHVDLIRAPEGFFYLRPKASTLIARSAMSEMEMLVGKVLCYLYLSPERLAQQGIFSQDDVYEELLNLADENKLLKAVNPRSTGSDLDRAKLAEKVGGALRRLARIGIITRVGEQNSKKFIISEAVFRFGADVRAGDDPREVQLRLIRDGEATTPTLLTTEAIEFAEDGARDELEESEAE</sequence>
<evidence type="ECO:0000255" key="1">
    <source>
        <dbReference type="HAMAP-Rule" id="MF_01802"/>
    </source>
</evidence>
<comment type="function">
    <text evidence="1">Involved in chromosome condensation, segregation and cell cycle progression. May participate in facilitating chromosome segregation by condensation DNA from both sides of a centrally located replisome during cell division. Probably acts via its interaction with MukB and MukF.</text>
</comment>
<comment type="subunit">
    <text evidence="1">Interacts, and probably forms a ternary complex, with MukF and MukB. The complex formation is stimulated by calcium or magnesium.</text>
</comment>
<comment type="subcellular location">
    <subcellularLocation>
        <location evidence="1">Cytoplasm</location>
        <location evidence="1">Nucleoid</location>
    </subcellularLocation>
    <text evidence="1">Restricted to the nucleoid region.</text>
</comment>
<comment type="similarity">
    <text evidence="1">Belongs to the MukE family.</text>
</comment>
<dbReference type="EMBL" id="AE017143">
    <property type="protein sequence ID" value="AAP96364.1"/>
    <property type="molecule type" value="Genomic_DNA"/>
</dbReference>
<dbReference type="RefSeq" id="WP_010945396.1">
    <property type="nucleotide sequence ID" value="NC_002940.2"/>
</dbReference>
<dbReference type="PDB" id="3EUK">
    <property type="method" value="X-ray"/>
    <property type="resolution" value="4.00 A"/>
    <property type="chains" value="L/M=1-238"/>
</dbReference>
<dbReference type="PDBsum" id="3EUK"/>
<dbReference type="SMR" id="Q7VL95"/>
<dbReference type="IntAct" id="Q7VL95">
    <property type="interactions" value="2"/>
</dbReference>
<dbReference type="STRING" id="233412.HD_1584"/>
<dbReference type="KEGG" id="hdu:HD_1584"/>
<dbReference type="eggNOG" id="COG3095">
    <property type="taxonomic scope" value="Bacteria"/>
</dbReference>
<dbReference type="HOGENOM" id="CLU_1146408_0_0_6"/>
<dbReference type="OrthoDB" id="6196648at2"/>
<dbReference type="EvolutionaryTrace" id="Q7VL95"/>
<dbReference type="Proteomes" id="UP000001022">
    <property type="component" value="Chromosome"/>
</dbReference>
<dbReference type="GO" id="GO:0005737">
    <property type="term" value="C:cytoplasm"/>
    <property type="evidence" value="ECO:0007669"/>
    <property type="project" value="UniProtKB-UniRule"/>
</dbReference>
<dbReference type="GO" id="GO:0009295">
    <property type="term" value="C:nucleoid"/>
    <property type="evidence" value="ECO:0007669"/>
    <property type="project" value="UniProtKB-SubCell"/>
</dbReference>
<dbReference type="GO" id="GO:0051301">
    <property type="term" value="P:cell division"/>
    <property type="evidence" value="ECO:0007669"/>
    <property type="project" value="UniProtKB-KW"/>
</dbReference>
<dbReference type="GO" id="GO:0030261">
    <property type="term" value="P:chromosome condensation"/>
    <property type="evidence" value="ECO:0007669"/>
    <property type="project" value="UniProtKB-KW"/>
</dbReference>
<dbReference type="GO" id="GO:0007059">
    <property type="term" value="P:chromosome segregation"/>
    <property type="evidence" value="ECO:0007669"/>
    <property type="project" value="UniProtKB-UniRule"/>
</dbReference>
<dbReference type="GO" id="GO:0006260">
    <property type="term" value="P:DNA replication"/>
    <property type="evidence" value="ECO:0007669"/>
    <property type="project" value="UniProtKB-UniRule"/>
</dbReference>
<dbReference type="CDD" id="cd16336">
    <property type="entry name" value="MukE"/>
    <property type="match status" value="1"/>
</dbReference>
<dbReference type="Gene3D" id="1.10.10.2250">
    <property type="match status" value="1"/>
</dbReference>
<dbReference type="Gene3D" id="1.10.10.2260">
    <property type="entry name" value="MukE-like family, C-terminal domain"/>
    <property type="match status" value="1"/>
</dbReference>
<dbReference type="HAMAP" id="MF_01802">
    <property type="entry name" value="MukE"/>
    <property type="match status" value="1"/>
</dbReference>
<dbReference type="InterPro" id="IPR042037">
    <property type="entry name" value="MukE_C"/>
</dbReference>
<dbReference type="InterPro" id="IPR042038">
    <property type="entry name" value="MukE_N"/>
</dbReference>
<dbReference type="InterPro" id="IPR007385">
    <property type="entry name" value="Scp_MukE"/>
</dbReference>
<dbReference type="NCBIfam" id="NF003602">
    <property type="entry name" value="PRK05256.1"/>
    <property type="match status" value="1"/>
</dbReference>
<dbReference type="Pfam" id="PF04288">
    <property type="entry name" value="MukE"/>
    <property type="match status" value="1"/>
</dbReference>
<name>MUKE_HAEDU</name>
<accession>Q7VL95</accession>
<organism>
    <name type="scientific">Haemophilus ducreyi (strain 35000HP / ATCC 700724)</name>
    <dbReference type="NCBI Taxonomy" id="233412"/>
    <lineage>
        <taxon>Bacteria</taxon>
        <taxon>Pseudomonadati</taxon>
        <taxon>Pseudomonadota</taxon>
        <taxon>Gammaproteobacteria</taxon>
        <taxon>Pasteurellales</taxon>
        <taxon>Pasteurellaceae</taxon>
        <taxon>Haemophilus</taxon>
    </lineage>
</organism>
<feature type="chain" id="PRO_0000206796" description="Chromosome partition protein MukE">
    <location>
        <begin position="1"/>
        <end position="238"/>
    </location>
</feature>
<reference key="1">
    <citation type="submission" date="2003-06" db="EMBL/GenBank/DDBJ databases">
        <title>The complete genome sequence of Haemophilus ducreyi.</title>
        <authorList>
            <person name="Munson R.S. Jr."/>
            <person name="Ray W.C."/>
            <person name="Mahairas G."/>
            <person name="Sabo P."/>
            <person name="Mungur R."/>
            <person name="Johnson L."/>
            <person name="Nguyen D."/>
            <person name="Wang J."/>
            <person name="Forst C."/>
            <person name="Hood L."/>
        </authorList>
    </citation>
    <scope>NUCLEOTIDE SEQUENCE [LARGE SCALE GENOMIC DNA]</scope>
    <source>
        <strain>35000HP / ATCC 700724</strain>
    </source>
</reference>
<gene>
    <name evidence="1" type="primary">mukE</name>
    <name type="ordered locus">HD_1584</name>
</gene>